<protein>
    <recommendedName>
        <fullName evidence="1">NAD(P)H-quinone oxidoreductase subunit J, chloroplastic</fullName>
        <ecNumber evidence="1">7.1.1.-</ecNumber>
    </recommendedName>
    <alternativeName>
        <fullName>NAD(P)H dehydrogenase subunit J</fullName>
    </alternativeName>
    <alternativeName>
        <fullName evidence="1">NADH-plastoquinone oxidoreductase subunit J</fullName>
    </alternativeName>
</protein>
<evidence type="ECO:0000255" key="1">
    <source>
        <dbReference type="HAMAP-Rule" id="MF_01357"/>
    </source>
</evidence>
<sequence length="158" mass="18492">MQGNLSAWLVKHALIHRSLGFDYQGIETLQIKPGDWHSIAVILYVYGYNYLRSQCAYDVAPGGLLASVYHLTRIEYGVDQPEEVCIKVFAPRKDPRIPSVFWVWKSVDFQERESYDMLGISYDNHPRLKRILMPESWIGWPLRKDYIAPNFYEIQDAH</sequence>
<geneLocation type="chloroplast"/>
<keyword id="KW-0150">Chloroplast</keyword>
<keyword id="KW-0472">Membrane</keyword>
<keyword id="KW-0520">NAD</keyword>
<keyword id="KW-0521">NADP</keyword>
<keyword id="KW-0934">Plastid</keyword>
<keyword id="KW-0618">Plastoquinone</keyword>
<keyword id="KW-0874">Quinone</keyword>
<keyword id="KW-0793">Thylakoid</keyword>
<keyword id="KW-1278">Translocase</keyword>
<keyword id="KW-0813">Transport</keyword>
<accession>Q1KXV6</accession>
<organism>
    <name type="scientific">Helianthus annuus</name>
    <name type="common">Common sunflower</name>
    <dbReference type="NCBI Taxonomy" id="4232"/>
    <lineage>
        <taxon>Eukaryota</taxon>
        <taxon>Viridiplantae</taxon>
        <taxon>Streptophyta</taxon>
        <taxon>Embryophyta</taxon>
        <taxon>Tracheophyta</taxon>
        <taxon>Spermatophyta</taxon>
        <taxon>Magnoliopsida</taxon>
        <taxon>eudicotyledons</taxon>
        <taxon>Gunneridae</taxon>
        <taxon>Pentapetalae</taxon>
        <taxon>asterids</taxon>
        <taxon>campanulids</taxon>
        <taxon>Asterales</taxon>
        <taxon>Asteraceae</taxon>
        <taxon>Asteroideae</taxon>
        <taxon>Heliantheae alliance</taxon>
        <taxon>Heliantheae</taxon>
        <taxon>Helianthus</taxon>
    </lineage>
</organism>
<proteinExistence type="inferred from homology"/>
<comment type="function">
    <text evidence="1">NDH shuttles electrons from NAD(P)H:plastoquinone, via FMN and iron-sulfur (Fe-S) centers, to quinones in the photosynthetic chain and possibly in a chloroplast respiratory chain. The immediate electron acceptor for the enzyme in this species is believed to be plastoquinone. Couples the redox reaction to proton translocation, and thus conserves the redox energy in a proton gradient.</text>
</comment>
<comment type="catalytic activity">
    <reaction evidence="1">
        <text>a plastoquinone + NADH + (n+1) H(+)(in) = a plastoquinol + NAD(+) + n H(+)(out)</text>
        <dbReference type="Rhea" id="RHEA:42608"/>
        <dbReference type="Rhea" id="RHEA-COMP:9561"/>
        <dbReference type="Rhea" id="RHEA-COMP:9562"/>
        <dbReference type="ChEBI" id="CHEBI:15378"/>
        <dbReference type="ChEBI" id="CHEBI:17757"/>
        <dbReference type="ChEBI" id="CHEBI:57540"/>
        <dbReference type="ChEBI" id="CHEBI:57945"/>
        <dbReference type="ChEBI" id="CHEBI:62192"/>
    </reaction>
</comment>
<comment type="catalytic activity">
    <reaction evidence="1">
        <text>a plastoquinone + NADPH + (n+1) H(+)(in) = a plastoquinol + NADP(+) + n H(+)(out)</text>
        <dbReference type="Rhea" id="RHEA:42612"/>
        <dbReference type="Rhea" id="RHEA-COMP:9561"/>
        <dbReference type="Rhea" id="RHEA-COMP:9562"/>
        <dbReference type="ChEBI" id="CHEBI:15378"/>
        <dbReference type="ChEBI" id="CHEBI:17757"/>
        <dbReference type="ChEBI" id="CHEBI:57783"/>
        <dbReference type="ChEBI" id="CHEBI:58349"/>
        <dbReference type="ChEBI" id="CHEBI:62192"/>
    </reaction>
</comment>
<comment type="subunit">
    <text evidence="1">NDH is composed of at least 16 different subunits, 5 of which are encoded in the nucleus.</text>
</comment>
<comment type="subcellular location">
    <subcellularLocation>
        <location evidence="1">Plastid</location>
        <location evidence="1">Chloroplast thylakoid membrane</location>
        <topology evidence="1">Peripheral membrane protein</topology>
        <orientation evidence="1">Stromal side</orientation>
    </subcellularLocation>
</comment>
<comment type="similarity">
    <text evidence="1">Belongs to the complex I 30 kDa subunit family.</text>
</comment>
<reference key="1">
    <citation type="submission" date="2006-01" db="EMBL/GenBank/DDBJ databases">
        <title>A comparison of the first two published chloroplast genomes in Asteraceae: Lactuca and Helianthus.</title>
        <authorList>
            <person name="Timme R.E."/>
            <person name="Kuehl J.V."/>
            <person name="Boore J.L."/>
            <person name="Jansen R.K."/>
        </authorList>
    </citation>
    <scope>NUCLEOTIDE SEQUENCE [LARGE SCALE GENOMIC DNA]</scope>
    <source>
        <strain>cv. HA383</strain>
    </source>
</reference>
<gene>
    <name evidence="1" type="primary">ndhJ</name>
</gene>
<feature type="chain" id="PRO_0000358270" description="NAD(P)H-quinone oxidoreductase subunit J, chloroplastic">
    <location>
        <begin position="1"/>
        <end position="158"/>
    </location>
</feature>
<name>NDHJ_HELAN</name>
<dbReference type="EC" id="7.1.1.-" evidence="1"/>
<dbReference type="EMBL" id="DQ383815">
    <property type="protein sequence ID" value="ABD47149.1"/>
    <property type="molecule type" value="Genomic_DNA"/>
</dbReference>
<dbReference type="RefSeq" id="YP_588120.1">
    <property type="nucleotide sequence ID" value="NC_007977.1"/>
</dbReference>
<dbReference type="SMR" id="Q1KXV6"/>
<dbReference type="EnsemblPlants" id="mRNA:HanXRQr2_Chr02g0061481">
    <property type="protein sequence ID" value="CDS:HanXRQr2_Chr02g0061481.1"/>
    <property type="gene ID" value="HanXRQr2_Chr02g0061481"/>
</dbReference>
<dbReference type="EnsemblPlants" id="mRNA:HanXRQr2_Chr04g0153031">
    <property type="protein sequence ID" value="CDS:HanXRQr2_Chr04g0153031.1"/>
    <property type="gene ID" value="HanXRQr2_Chr04g0153031"/>
</dbReference>
<dbReference type="GeneID" id="4055701"/>
<dbReference type="Gramene" id="mRNA:HanXRQr2_Chr02g0061481">
    <property type="protein sequence ID" value="CDS:HanXRQr2_Chr02g0061481.1"/>
    <property type="gene ID" value="HanXRQr2_Chr02g0061481"/>
</dbReference>
<dbReference type="Gramene" id="mRNA:HanXRQr2_Chr04g0153031">
    <property type="protein sequence ID" value="CDS:HanXRQr2_Chr04g0153031.1"/>
    <property type="gene ID" value="HanXRQr2_Chr04g0153031"/>
</dbReference>
<dbReference type="KEGG" id="han:4055701"/>
<dbReference type="OrthoDB" id="1909959at2759"/>
<dbReference type="PhylomeDB" id="Q1KXV6"/>
<dbReference type="GO" id="GO:0009535">
    <property type="term" value="C:chloroplast thylakoid membrane"/>
    <property type="evidence" value="ECO:0007669"/>
    <property type="project" value="UniProtKB-SubCell"/>
</dbReference>
<dbReference type="GO" id="GO:0008137">
    <property type="term" value="F:NADH dehydrogenase (ubiquinone) activity"/>
    <property type="evidence" value="ECO:0007669"/>
    <property type="project" value="InterPro"/>
</dbReference>
<dbReference type="GO" id="GO:0048038">
    <property type="term" value="F:quinone binding"/>
    <property type="evidence" value="ECO:0007669"/>
    <property type="project" value="UniProtKB-KW"/>
</dbReference>
<dbReference type="GO" id="GO:0019684">
    <property type="term" value="P:photosynthesis, light reaction"/>
    <property type="evidence" value="ECO:0007669"/>
    <property type="project" value="UniProtKB-UniRule"/>
</dbReference>
<dbReference type="FunFam" id="3.30.460.80:FF:000004">
    <property type="entry name" value="NAD(P)H-quinone oxidoreductase subunit J, chloroplastic"/>
    <property type="match status" value="1"/>
</dbReference>
<dbReference type="Gene3D" id="3.30.460.80">
    <property type="entry name" value="NADH:ubiquinone oxidoreductase, 30kDa subunit"/>
    <property type="match status" value="1"/>
</dbReference>
<dbReference type="HAMAP" id="MF_01357">
    <property type="entry name" value="NDH1_NuoC"/>
    <property type="match status" value="1"/>
</dbReference>
<dbReference type="InterPro" id="IPR010218">
    <property type="entry name" value="NADH_DH_suC"/>
</dbReference>
<dbReference type="InterPro" id="IPR037232">
    <property type="entry name" value="NADH_quin_OxRdtase_su_C/D-like"/>
</dbReference>
<dbReference type="InterPro" id="IPR001268">
    <property type="entry name" value="NADH_UbQ_OxRdtase_30kDa_su"/>
</dbReference>
<dbReference type="InterPro" id="IPR020396">
    <property type="entry name" value="NADH_UbQ_OxRdtase_CS"/>
</dbReference>
<dbReference type="NCBIfam" id="NF009141">
    <property type="entry name" value="PRK12494.1"/>
    <property type="match status" value="1"/>
</dbReference>
<dbReference type="PANTHER" id="PTHR10884:SF14">
    <property type="entry name" value="NADH DEHYDROGENASE [UBIQUINONE] IRON-SULFUR PROTEIN 3, MITOCHONDRIAL"/>
    <property type="match status" value="1"/>
</dbReference>
<dbReference type="PANTHER" id="PTHR10884">
    <property type="entry name" value="NADH DEHYDROGENASE UBIQUINONE IRON-SULFUR PROTEIN 3"/>
    <property type="match status" value="1"/>
</dbReference>
<dbReference type="Pfam" id="PF00329">
    <property type="entry name" value="Complex1_30kDa"/>
    <property type="match status" value="1"/>
</dbReference>
<dbReference type="SUPFAM" id="SSF143243">
    <property type="entry name" value="Nqo5-like"/>
    <property type="match status" value="1"/>
</dbReference>
<dbReference type="PROSITE" id="PS00542">
    <property type="entry name" value="COMPLEX1_30K"/>
    <property type="match status" value="1"/>
</dbReference>